<comment type="function">
    <text evidence="1">NDH-1 shuttles electrons from NADH, via FMN and iron-sulfur (Fe-S) centers, to quinones in the respiratory chain. Couples the redox reaction to proton translocation (for every two electrons transferred, four hydrogen ions are translocated across the cytoplasmic membrane), and thus conserves the redox energy in a proton gradient (By similarity).</text>
</comment>
<comment type="catalytic activity">
    <reaction>
        <text>a quinone + NADH + 5 H(+)(in) = a quinol + NAD(+) + 4 H(+)(out)</text>
        <dbReference type="Rhea" id="RHEA:57888"/>
        <dbReference type="ChEBI" id="CHEBI:15378"/>
        <dbReference type="ChEBI" id="CHEBI:24646"/>
        <dbReference type="ChEBI" id="CHEBI:57540"/>
        <dbReference type="ChEBI" id="CHEBI:57945"/>
        <dbReference type="ChEBI" id="CHEBI:132124"/>
    </reaction>
</comment>
<comment type="cofactor">
    <cofactor evidence="3">
        <name>FMN</name>
        <dbReference type="ChEBI" id="CHEBI:58210"/>
    </cofactor>
    <text evidence="3">Binds 1 FMN.</text>
</comment>
<comment type="cofactor">
    <cofactor evidence="3">
        <name>[4Fe-4S] cluster</name>
        <dbReference type="ChEBI" id="CHEBI:49883"/>
    </cofactor>
    <text evidence="3">Binds 1 [4Fe-4S] cluster.</text>
</comment>
<comment type="subunit">
    <text evidence="1">Composed of 13 different subunits. Subunits NuoCD, E, F, and G constitute the peripheral sector of the complex (By similarity).</text>
</comment>
<comment type="similarity">
    <text evidence="3">Belongs to the complex I 51 kDa subunit family.</text>
</comment>
<reference key="1">
    <citation type="journal article" date="2000" name="Nature">
        <title>Genome sequence of the endocellular bacterial symbiont of aphids Buchnera sp. APS.</title>
        <authorList>
            <person name="Shigenobu S."/>
            <person name="Watanabe H."/>
            <person name="Hattori M."/>
            <person name="Sakaki Y."/>
            <person name="Ishikawa H."/>
        </authorList>
    </citation>
    <scope>NUCLEOTIDE SEQUENCE [LARGE SCALE GENOMIC DNA]</scope>
    <source>
        <strain>APS</strain>
    </source>
</reference>
<name>NUOF_BUCAI</name>
<feature type="chain" id="PRO_0000118571" description="NADH-quinone oxidoreductase subunit F">
    <location>
        <begin position="1"/>
        <end position="444"/>
    </location>
</feature>
<feature type="binding site" evidence="1">
    <location>
        <begin position="61"/>
        <end position="70"/>
    </location>
    <ligand>
        <name>NAD(+)</name>
        <dbReference type="ChEBI" id="CHEBI:57540"/>
    </ligand>
</feature>
<feature type="binding site" evidence="1">
    <location>
        <begin position="176"/>
        <end position="223"/>
    </location>
    <ligand>
        <name>FMN</name>
        <dbReference type="ChEBI" id="CHEBI:58210"/>
    </ligand>
</feature>
<feature type="binding site" evidence="2">
    <location>
        <position position="353"/>
    </location>
    <ligand>
        <name>[4Fe-4S] cluster</name>
        <dbReference type="ChEBI" id="CHEBI:49883"/>
    </ligand>
</feature>
<feature type="binding site" evidence="2">
    <location>
        <position position="356"/>
    </location>
    <ligand>
        <name>[4Fe-4S] cluster</name>
        <dbReference type="ChEBI" id="CHEBI:49883"/>
    </ligand>
</feature>
<feature type="binding site" evidence="2">
    <location>
        <position position="359"/>
    </location>
    <ligand>
        <name>[4Fe-4S] cluster</name>
        <dbReference type="ChEBI" id="CHEBI:49883"/>
    </ligand>
</feature>
<feature type="binding site" evidence="2">
    <location>
        <position position="400"/>
    </location>
    <ligand>
        <name>[4Fe-4S] cluster</name>
        <dbReference type="ChEBI" id="CHEBI:49883"/>
    </ligand>
</feature>
<evidence type="ECO:0000250" key="1"/>
<evidence type="ECO:0000255" key="2"/>
<evidence type="ECO:0000305" key="3"/>
<sequence>MNRILRISETHPLTWRLRDDQKTVWIKEYCDKNGYLSLKKALKEMLPEDVINIVKESGLKGRGGAGFSTGLKWSLMSQNHSYTRERGYLICNADEMEPGTYKDRLLIEKIPHQLIEGIILSAYALNVSRAYIFLRGEYVQAEHILKQSIQEAINFGFIGLNILGSNFNIELVLHTGAGRYICGEETALINSLEGRRANPRSKPPFPAVFGLWGKPTCVNNVETLSNVPCIILNGVSWYKNLSKSSDTGTKLMGFSGNVRNPGVWELPFGTTAREILEDYAHGMKSGFSLKAWQPGGAGTDFLLEEHLDLPMDFKNISQAGSRLGTALSMAVDNKTSMVSLVYNIEKFFSRESCGLCTPCRDGLPWIVKILKSLEQNKGHKNDVKNLEKLCSHLSPGKTFCAHAPGAIEPLQSAIKYFRSEFESGINIRKRDLNKKIIGIQSNCI</sequence>
<keyword id="KW-0004">4Fe-4S</keyword>
<keyword id="KW-0285">Flavoprotein</keyword>
<keyword id="KW-0288">FMN</keyword>
<keyword id="KW-0408">Iron</keyword>
<keyword id="KW-0411">Iron-sulfur</keyword>
<keyword id="KW-0479">Metal-binding</keyword>
<keyword id="KW-0520">NAD</keyword>
<keyword id="KW-0874">Quinone</keyword>
<keyword id="KW-1185">Reference proteome</keyword>
<keyword id="KW-1278">Translocase</keyword>
<gene>
    <name type="primary">nuoF</name>
    <name type="ordered locus">BU158</name>
</gene>
<organism>
    <name type="scientific">Buchnera aphidicola subsp. Acyrthosiphon pisum (strain APS)</name>
    <name type="common">Acyrthosiphon pisum symbiotic bacterium</name>
    <dbReference type="NCBI Taxonomy" id="107806"/>
    <lineage>
        <taxon>Bacteria</taxon>
        <taxon>Pseudomonadati</taxon>
        <taxon>Pseudomonadota</taxon>
        <taxon>Gammaproteobacteria</taxon>
        <taxon>Enterobacterales</taxon>
        <taxon>Erwiniaceae</taxon>
        <taxon>Buchnera</taxon>
    </lineage>
</organism>
<proteinExistence type="inferred from homology"/>
<dbReference type="EC" id="7.1.1.-"/>
<dbReference type="EMBL" id="BA000003">
    <property type="protein sequence ID" value="BAB12876.1"/>
    <property type="molecule type" value="Genomic_DNA"/>
</dbReference>
<dbReference type="RefSeq" id="NP_239990.1">
    <property type="nucleotide sequence ID" value="NC_002528.1"/>
</dbReference>
<dbReference type="RefSeq" id="WP_010895976.1">
    <property type="nucleotide sequence ID" value="NC_002528.1"/>
</dbReference>
<dbReference type="SMR" id="P57256"/>
<dbReference type="STRING" id="563178.BUAP5A_156"/>
<dbReference type="EnsemblBacteria" id="BAB12876">
    <property type="protein sequence ID" value="BAB12876"/>
    <property type="gene ID" value="BAB12876"/>
</dbReference>
<dbReference type="KEGG" id="buc:BU158"/>
<dbReference type="PATRIC" id="fig|107806.10.peg.168"/>
<dbReference type="eggNOG" id="COG1894">
    <property type="taxonomic scope" value="Bacteria"/>
</dbReference>
<dbReference type="HOGENOM" id="CLU_014881_0_1_6"/>
<dbReference type="Proteomes" id="UP000001806">
    <property type="component" value="Chromosome"/>
</dbReference>
<dbReference type="GO" id="GO:0051539">
    <property type="term" value="F:4 iron, 4 sulfur cluster binding"/>
    <property type="evidence" value="ECO:0007669"/>
    <property type="project" value="UniProtKB-KW"/>
</dbReference>
<dbReference type="GO" id="GO:0010181">
    <property type="term" value="F:FMN binding"/>
    <property type="evidence" value="ECO:0007669"/>
    <property type="project" value="InterPro"/>
</dbReference>
<dbReference type="GO" id="GO:0046872">
    <property type="term" value="F:metal ion binding"/>
    <property type="evidence" value="ECO:0007669"/>
    <property type="project" value="UniProtKB-KW"/>
</dbReference>
<dbReference type="GO" id="GO:0051287">
    <property type="term" value="F:NAD binding"/>
    <property type="evidence" value="ECO:0007669"/>
    <property type="project" value="InterPro"/>
</dbReference>
<dbReference type="GO" id="GO:0008137">
    <property type="term" value="F:NADH dehydrogenase (ubiquinone) activity"/>
    <property type="evidence" value="ECO:0007669"/>
    <property type="project" value="InterPro"/>
</dbReference>
<dbReference type="GO" id="GO:0048038">
    <property type="term" value="F:quinone binding"/>
    <property type="evidence" value="ECO:0007669"/>
    <property type="project" value="UniProtKB-KW"/>
</dbReference>
<dbReference type="FunFam" id="3.40.50.11540:FF:000001">
    <property type="entry name" value="NADH dehydrogenase [ubiquinone] flavoprotein 1, mitochondrial"/>
    <property type="match status" value="1"/>
</dbReference>
<dbReference type="FunFam" id="1.20.1440.230:FF:000002">
    <property type="entry name" value="NADH-quinone oxidoreductase subunit F"/>
    <property type="match status" value="1"/>
</dbReference>
<dbReference type="FunFam" id="3.10.20.600:FF:000002">
    <property type="entry name" value="NADH-quinone oxidoreductase subunit F"/>
    <property type="match status" value="1"/>
</dbReference>
<dbReference type="Gene3D" id="3.10.20.600">
    <property type="match status" value="1"/>
</dbReference>
<dbReference type="Gene3D" id="6.10.250.1450">
    <property type="match status" value="1"/>
</dbReference>
<dbReference type="Gene3D" id="3.40.50.11540">
    <property type="entry name" value="NADH-ubiquinone oxidoreductase 51kDa subunit"/>
    <property type="match status" value="1"/>
</dbReference>
<dbReference type="Gene3D" id="1.20.1440.230">
    <property type="entry name" value="NADH-ubiquinone oxidoreductase 51kDa subunit, iron-sulphur binding domain"/>
    <property type="match status" value="1"/>
</dbReference>
<dbReference type="InterPro" id="IPR001949">
    <property type="entry name" value="NADH-UbQ_OxRdtase_51kDa_CS"/>
</dbReference>
<dbReference type="InterPro" id="IPR011537">
    <property type="entry name" value="NADH-UbQ_OxRdtase_suF"/>
</dbReference>
<dbReference type="InterPro" id="IPR011538">
    <property type="entry name" value="Nuo51_FMN-bd"/>
</dbReference>
<dbReference type="InterPro" id="IPR037225">
    <property type="entry name" value="Nuo51_FMN-bd_sf"/>
</dbReference>
<dbReference type="InterPro" id="IPR019575">
    <property type="entry name" value="Nuop51_4Fe4S-bd"/>
</dbReference>
<dbReference type="InterPro" id="IPR037207">
    <property type="entry name" value="Nuop51_4Fe4S-bd_sf"/>
</dbReference>
<dbReference type="NCBIfam" id="TIGR01959">
    <property type="entry name" value="nuoF_fam"/>
    <property type="match status" value="1"/>
</dbReference>
<dbReference type="NCBIfam" id="NF008436">
    <property type="entry name" value="PRK11278.1"/>
    <property type="match status" value="1"/>
</dbReference>
<dbReference type="NCBIfam" id="NF010120">
    <property type="entry name" value="PRK13596.1"/>
    <property type="match status" value="1"/>
</dbReference>
<dbReference type="PANTHER" id="PTHR43578">
    <property type="entry name" value="NADH-QUINONE OXIDOREDUCTASE SUBUNIT F"/>
    <property type="match status" value="1"/>
</dbReference>
<dbReference type="PANTHER" id="PTHR43578:SF3">
    <property type="entry name" value="NADH-QUINONE OXIDOREDUCTASE SUBUNIT F"/>
    <property type="match status" value="1"/>
</dbReference>
<dbReference type="Pfam" id="PF01512">
    <property type="entry name" value="Complex1_51K"/>
    <property type="match status" value="1"/>
</dbReference>
<dbReference type="Pfam" id="PF10589">
    <property type="entry name" value="NADH_4Fe-4S"/>
    <property type="match status" value="1"/>
</dbReference>
<dbReference type="SMART" id="SM00928">
    <property type="entry name" value="NADH_4Fe-4S"/>
    <property type="match status" value="1"/>
</dbReference>
<dbReference type="SUPFAM" id="SSF142019">
    <property type="entry name" value="Nqo1 FMN-binding domain-like"/>
    <property type="match status" value="1"/>
</dbReference>
<dbReference type="SUPFAM" id="SSF142984">
    <property type="entry name" value="Nqo1 middle domain-like"/>
    <property type="match status" value="1"/>
</dbReference>
<dbReference type="SUPFAM" id="SSF140490">
    <property type="entry name" value="Nqo1C-terminal domain-like"/>
    <property type="match status" value="1"/>
</dbReference>
<dbReference type="PROSITE" id="PS00644">
    <property type="entry name" value="COMPLEX1_51K_1"/>
    <property type="match status" value="1"/>
</dbReference>
<dbReference type="PROSITE" id="PS00645">
    <property type="entry name" value="COMPLEX1_51K_2"/>
    <property type="match status" value="1"/>
</dbReference>
<accession>P57256</accession>
<protein>
    <recommendedName>
        <fullName>NADH-quinone oxidoreductase subunit F</fullName>
        <ecNumber>7.1.1.-</ecNumber>
    </recommendedName>
    <alternativeName>
        <fullName>NADH dehydrogenase I subunit F</fullName>
    </alternativeName>
    <alternativeName>
        <fullName>NDH-1 subunit F</fullName>
    </alternativeName>
</protein>